<dbReference type="EC" id="3.4.21.-"/>
<dbReference type="EMBL" id="AM270178">
    <property type="protein sequence ID" value="CAK96647.1"/>
    <property type="status" value="ALT_INIT"/>
    <property type="molecule type" value="Genomic_DNA"/>
</dbReference>
<dbReference type="RefSeq" id="XP_001392979.2">
    <property type="nucleotide sequence ID" value="XM_001392942.2"/>
</dbReference>
<dbReference type="SMR" id="A5AB13"/>
<dbReference type="MEROPS" id="S01.434"/>
<dbReference type="EnsemblFungi" id="CAK96647">
    <property type="protein sequence ID" value="CAK96647"/>
    <property type="gene ID" value="An08g08670"/>
</dbReference>
<dbReference type="GeneID" id="4983185"/>
<dbReference type="KEGG" id="ang:An08g08670"/>
<dbReference type="Proteomes" id="UP000006706">
    <property type="component" value="Chromosome 8R"/>
</dbReference>
<dbReference type="GO" id="GO:0005634">
    <property type="term" value="C:nucleus"/>
    <property type="evidence" value="ECO:0007669"/>
    <property type="project" value="UniProtKB-SubCell"/>
</dbReference>
<dbReference type="GO" id="GO:0004252">
    <property type="term" value="F:serine-type endopeptidase activity"/>
    <property type="evidence" value="ECO:0007669"/>
    <property type="project" value="InterPro"/>
</dbReference>
<dbReference type="GO" id="GO:0006915">
    <property type="term" value="P:apoptotic process"/>
    <property type="evidence" value="ECO:0007669"/>
    <property type="project" value="UniProtKB-KW"/>
</dbReference>
<dbReference type="GO" id="GO:0006508">
    <property type="term" value="P:proteolysis"/>
    <property type="evidence" value="ECO:0007669"/>
    <property type="project" value="UniProtKB-KW"/>
</dbReference>
<dbReference type="CDD" id="cd06786">
    <property type="entry name" value="cpPDZ1_ScNma111-like"/>
    <property type="match status" value="1"/>
</dbReference>
<dbReference type="CDD" id="cd06719">
    <property type="entry name" value="PDZ2-4_Nma111p-like"/>
    <property type="match status" value="2"/>
</dbReference>
<dbReference type="Gene3D" id="2.30.42.10">
    <property type="match status" value="1"/>
</dbReference>
<dbReference type="Gene3D" id="2.40.10.120">
    <property type="match status" value="2"/>
</dbReference>
<dbReference type="InterPro" id="IPR001478">
    <property type="entry name" value="PDZ"/>
</dbReference>
<dbReference type="InterPro" id="IPR025926">
    <property type="entry name" value="PDZ-like_dom"/>
</dbReference>
<dbReference type="InterPro" id="IPR041489">
    <property type="entry name" value="PDZ_6"/>
</dbReference>
<dbReference type="InterPro" id="IPR036034">
    <property type="entry name" value="PDZ_sf"/>
</dbReference>
<dbReference type="InterPro" id="IPR009003">
    <property type="entry name" value="Peptidase_S1_PA"/>
</dbReference>
<dbReference type="InterPro" id="IPR001940">
    <property type="entry name" value="Peptidase_S1C"/>
</dbReference>
<dbReference type="PANTHER" id="PTHR46366">
    <property type="entry name" value="PRO-APOPTOTIC SERINE PROTEASE NMA111"/>
    <property type="match status" value="1"/>
</dbReference>
<dbReference type="PANTHER" id="PTHR46366:SF8">
    <property type="entry name" value="PRO-APOPTOTIC SERINE PROTEASE NMA111"/>
    <property type="match status" value="1"/>
</dbReference>
<dbReference type="Pfam" id="PF12812">
    <property type="entry name" value="PDZ_1"/>
    <property type="match status" value="2"/>
</dbReference>
<dbReference type="Pfam" id="PF17820">
    <property type="entry name" value="PDZ_6"/>
    <property type="match status" value="1"/>
</dbReference>
<dbReference type="Pfam" id="PF13365">
    <property type="entry name" value="Trypsin_2"/>
    <property type="match status" value="1"/>
</dbReference>
<dbReference type="PRINTS" id="PR00834">
    <property type="entry name" value="PROTEASES2C"/>
</dbReference>
<dbReference type="SMART" id="SM00228">
    <property type="entry name" value="PDZ"/>
    <property type="match status" value="2"/>
</dbReference>
<dbReference type="SUPFAM" id="SSF50156">
    <property type="entry name" value="PDZ domain-like"/>
    <property type="match status" value="3"/>
</dbReference>
<dbReference type="SUPFAM" id="SSF50494">
    <property type="entry name" value="Trypsin-like serine proteases"/>
    <property type="match status" value="2"/>
</dbReference>
<proteinExistence type="inferred from homology"/>
<comment type="function">
    <text evidence="1">Nuclear serine protease which mediates apoptosis.</text>
</comment>
<comment type="subcellular location">
    <subcellularLocation>
        <location evidence="1">Nucleus</location>
    </subcellularLocation>
</comment>
<comment type="similarity">
    <text evidence="4">Belongs to the peptidase S1C family.</text>
</comment>
<comment type="sequence caution" evidence="4">
    <conflict type="erroneous initiation">
        <sequence resource="EMBL-CDS" id="CAK96647"/>
    </conflict>
</comment>
<evidence type="ECO:0000250" key="1"/>
<evidence type="ECO:0000255" key="2"/>
<evidence type="ECO:0000256" key="3">
    <source>
        <dbReference type="SAM" id="MobiDB-lite"/>
    </source>
</evidence>
<evidence type="ECO:0000305" key="4"/>
<protein>
    <recommendedName>
        <fullName>Pro-apoptotic serine protease nma111</fullName>
        <ecNumber>3.4.21.-</ecNumber>
    </recommendedName>
</protein>
<reference key="1">
    <citation type="journal article" date="2007" name="Nat. Biotechnol.">
        <title>Genome sequencing and analysis of the versatile cell factory Aspergillus niger CBS 513.88.</title>
        <authorList>
            <person name="Pel H.J."/>
            <person name="de Winde J.H."/>
            <person name="Archer D.B."/>
            <person name="Dyer P.S."/>
            <person name="Hofmann G."/>
            <person name="Schaap P.J."/>
            <person name="Turner G."/>
            <person name="de Vries R.P."/>
            <person name="Albang R."/>
            <person name="Albermann K."/>
            <person name="Andersen M.R."/>
            <person name="Bendtsen J.D."/>
            <person name="Benen J.A.E."/>
            <person name="van den Berg M."/>
            <person name="Breestraat S."/>
            <person name="Caddick M.X."/>
            <person name="Contreras R."/>
            <person name="Cornell M."/>
            <person name="Coutinho P.M."/>
            <person name="Danchin E.G.J."/>
            <person name="Debets A.J.M."/>
            <person name="Dekker P."/>
            <person name="van Dijck P.W.M."/>
            <person name="van Dijk A."/>
            <person name="Dijkhuizen L."/>
            <person name="Driessen A.J.M."/>
            <person name="d'Enfert C."/>
            <person name="Geysens S."/>
            <person name="Goosen C."/>
            <person name="Groot G.S.P."/>
            <person name="de Groot P.W.J."/>
            <person name="Guillemette T."/>
            <person name="Henrissat B."/>
            <person name="Herweijer M."/>
            <person name="van den Hombergh J.P.T.W."/>
            <person name="van den Hondel C.A.M.J.J."/>
            <person name="van der Heijden R.T.J.M."/>
            <person name="van der Kaaij R.M."/>
            <person name="Klis F.M."/>
            <person name="Kools H.J."/>
            <person name="Kubicek C.P."/>
            <person name="van Kuyk P.A."/>
            <person name="Lauber J."/>
            <person name="Lu X."/>
            <person name="van der Maarel M.J.E.C."/>
            <person name="Meulenberg R."/>
            <person name="Menke H."/>
            <person name="Mortimer M.A."/>
            <person name="Nielsen J."/>
            <person name="Oliver S.G."/>
            <person name="Olsthoorn M."/>
            <person name="Pal K."/>
            <person name="van Peij N.N.M.E."/>
            <person name="Ram A.F.J."/>
            <person name="Rinas U."/>
            <person name="Roubos J.A."/>
            <person name="Sagt C.M.J."/>
            <person name="Schmoll M."/>
            <person name="Sun J."/>
            <person name="Ussery D."/>
            <person name="Varga J."/>
            <person name="Vervecken W."/>
            <person name="van de Vondervoort P.J.J."/>
            <person name="Wedler H."/>
            <person name="Woesten H.A.B."/>
            <person name="Zeng A.-P."/>
            <person name="van Ooyen A.J.J."/>
            <person name="Visser J."/>
            <person name="Stam H."/>
        </authorList>
    </citation>
    <scope>NUCLEOTIDE SEQUENCE [LARGE SCALE GENOMIC DNA]</scope>
    <source>
        <strain>ATCC MYA-4892 / CBS 513.88 / FGSC A1513</strain>
    </source>
</reference>
<gene>
    <name type="primary">nma111</name>
    <name type="ORF">An08g08670</name>
</gene>
<name>NM111_ASPNC</name>
<keyword id="KW-0053">Apoptosis</keyword>
<keyword id="KW-0378">Hydrolase</keyword>
<keyword id="KW-0539">Nucleus</keyword>
<keyword id="KW-0645">Protease</keyword>
<keyword id="KW-1185">Reference proteome</keyword>
<keyword id="KW-0677">Repeat</keyword>
<keyword id="KW-0720">Serine protease</keyword>
<feature type="chain" id="PRO_5000242372" description="Pro-apoptotic serine protease nma111">
    <location>
        <begin position="1"/>
        <end position="1028"/>
    </location>
</feature>
<feature type="domain" description="PDZ 1">
    <location>
        <begin position="289"/>
        <end position="374"/>
    </location>
</feature>
<feature type="domain" description="PDZ 2">
    <location>
        <begin position="876"/>
        <end position="957"/>
    </location>
</feature>
<feature type="region of interest" description="Disordered" evidence="3">
    <location>
        <begin position="1"/>
        <end position="49"/>
    </location>
</feature>
<feature type="region of interest" description="Serine protease">
    <location>
        <begin position="82"/>
        <end position="266"/>
    </location>
</feature>
<feature type="region of interest" description="Disordered" evidence="3">
    <location>
        <begin position="983"/>
        <end position="1028"/>
    </location>
</feature>
<feature type="compositionally biased region" description="Polar residues" evidence="3">
    <location>
        <begin position="32"/>
        <end position="43"/>
    </location>
</feature>
<feature type="compositionally biased region" description="Basic and acidic residues" evidence="3">
    <location>
        <begin position="990"/>
        <end position="1001"/>
    </location>
</feature>
<feature type="compositionally biased region" description="Acidic residues" evidence="3">
    <location>
        <begin position="1012"/>
        <end position="1028"/>
    </location>
</feature>
<feature type="active site" description="Charge relay system" evidence="2">
    <location>
        <position position="120"/>
    </location>
</feature>
<feature type="active site" description="Charge relay system" evidence="2">
    <location>
        <position position="151"/>
    </location>
</feature>
<feature type="active site" description="Charge relay system" evidence="2">
    <location>
        <position position="233"/>
    </location>
</feature>
<sequence>MDLNGDAGAKRKRSSITTPAERPVKHLRPESSALTPGDSTPANGTVYDVEDDEDASRLLPVGPAQADSPEWQATIEEVVKSVVSIHFCQTCSFDTELSMSSQATGFVVDAENGYILTNRHVVCPGPFWGYCIFDNHEECDVRPVYRDPVHDFGILKFDPKAIRYMKLRELKLQPDAAKVGSEIRVVGNDAGEKLSILSGVISRLDRNAPEYGDGYSDFNTNYIQAAAAASGGSSGSPVVNIDGHAIALQAGGRADGAATDYFLPLDRPLRALECIRRGEPVTRGTIQTQWILKPFDECRRLGLTPEWEATVRKAAPTETSMLVAEIILPEGPADGKLEEGDVLLQVNGVLLTQFIRLDDILDSSVGQTVRLLVQRGGQNVEIECQVGDLHAITPDRFVTVAGGTFHNLSYQQSRLYAIATRGVYVCEAAGSFKLENTLSGWIIDSVDKRPTRNLDEFVEVMRTIPDRSRVVISYRHIRDLHTRGTSIVYIDRHWHPKMRLAVRNDDTGLWDFSDLADPIPALPPVPRKADFIQLDGVSQPAAADIVRSFVRVSCTMPLKLDGYPQAKKTGFGLVVDAEKGLVVVSRAIVPYDLCDINVTVADSIIVNAKVVFLHPLQNYSIIQYDPSLVQAPVQSAKLATDYIKQGQDTIFVGFNQNFRIVVAKTAVTDITTVSIPANASAPRYRAINLDAITVDTGLSGQCSNGVLIGEDGVVQALWLNYLGERTSNSHKDVEYHLGFATPSLLPVLSKVQQGEMPELRILNMESYVVQMSQARIMGVSEEWIEKVTQANPSRHQLFMVRKVDCPPPGFNSAADTFEEGDIILTLDGQLITRVSELDIMYEKDTLEALIVRNGQEMRIQVPTVPTEDLETDRAVVFCGAVLQKPHHAVRQQISKLHSEVYVSARSRGSPSYQYGLAPTNFITAVNGVPTPNLDRFSEEVSKIPDNTYFRLRAVTFDNVPWVVTVKKNDHYFPMSEYIKDQSQPSGWRTVSHDKDKYKDGIAPDAANLNPDAMDEGFDGVSDIEPDLE</sequence>
<accession>A5AB13</accession>
<organism>
    <name type="scientific">Aspergillus niger (strain ATCC MYA-4892 / CBS 513.88 / FGSC A1513)</name>
    <dbReference type="NCBI Taxonomy" id="425011"/>
    <lineage>
        <taxon>Eukaryota</taxon>
        <taxon>Fungi</taxon>
        <taxon>Dikarya</taxon>
        <taxon>Ascomycota</taxon>
        <taxon>Pezizomycotina</taxon>
        <taxon>Eurotiomycetes</taxon>
        <taxon>Eurotiomycetidae</taxon>
        <taxon>Eurotiales</taxon>
        <taxon>Aspergillaceae</taxon>
        <taxon>Aspergillus</taxon>
        <taxon>Aspergillus subgen. Circumdati</taxon>
    </lineage>
</organism>